<comment type="function">
    <text>Probably involved in copper export.</text>
</comment>
<comment type="catalytic activity">
    <reaction>
        <text>Cu(2+)(in) + ATP + H2O = Cu(2+)(out) + ADP + phosphate + H(+)</text>
        <dbReference type="Rhea" id="RHEA:10376"/>
        <dbReference type="ChEBI" id="CHEBI:15377"/>
        <dbReference type="ChEBI" id="CHEBI:15378"/>
        <dbReference type="ChEBI" id="CHEBI:29036"/>
        <dbReference type="ChEBI" id="CHEBI:30616"/>
        <dbReference type="ChEBI" id="CHEBI:43474"/>
        <dbReference type="ChEBI" id="CHEBI:456216"/>
        <dbReference type="EC" id="7.2.2.9"/>
    </reaction>
</comment>
<comment type="subcellular location">
    <subcellularLocation>
        <location>Cell membrane</location>
        <topology>Multi-pass membrane protein</topology>
    </subcellularLocation>
</comment>
<comment type="similarity">
    <text evidence="4">Belongs to the cation transport ATPase (P-type) (TC 3.A.3) family. Type IB subfamily.</text>
</comment>
<gene>
    <name type="primary">copA</name>
</gene>
<accession>Q59467</accession>
<dbReference type="EC" id="7.2.2.9"/>
<dbReference type="EMBL" id="U59625">
    <property type="protein sequence ID" value="AAB05475.1"/>
    <property type="molecule type" value="Genomic_DNA"/>
</dbReference>
<dbReference type="SMR" id="Q59467"/>
<dbReference type="GO" id="GO:0005886">
    <property type="term" value="C:plasma membrane"/>
    <property type="evidence" value="ECO:0007669"/>
    <property type="project" value="UniProtKB-SubCell"/>
</dbReference>
<dbReference type="GO" id="GO:0005524">
    <property type="term" value="F:ATP binding"/>
    <property type="evidence" value="ECO:0007669"/>
    <property type="project" value="UniProtKB-KW"/>
</dbReference>
<dbReference type="GO" id="GO:0016887">
    <property type="term" value="F:ATP hydrolysis activity"/>
    <property type="evidence" value="ECO:0007669"/>
    <property type="project" value="InterPro"/>
</dbReference>
<dbReference type="GO" id="GO:0005507">
    <property type="term" value="F:copper ion binding"/>
    <property type="evidence" value="ECO:0007669"/>
    <property type="project" value="TreeGrafter"/>
</dbReference>
<dbReference type="GO" id="GO:0043682">
    <property type="term" value="F:P-type divalent copper transporter activity"/>
    <property type="evidence" value="ECO:0007669"/>
    <property type="project" value="UniProtKB-EC"/>
</dbReference>
<dbReference type="GO" id="GO:0055070">
    <property type="term" value="P:copper ion homeostasis"/>
    <property type="evidence" value="ECO:0007669"/>
    <property type="project" value="TreeGrafter"/>
</dbReference>
<dbReference type="GO" id="GO:0006825">
    <property type="term" value="P:copper ion transport"/>
    <property type="evidence" value="ECO:0000315"/>
    <property type="project" value="CACAO"/>
</dbReference>
<dbReference type="CDD" id="cd00371">
    <property type="entry name" value="HMA"/>
    <property type="match status" value="1"/>
</dbReference>
<dbReference type="CDD" id="cd02094">
    <property type="entry name" value="P-type_ATPase_Cu-like"/>
    <property type="match status" value="1"/>
</dbReference>
<dbReference type="FunFam" id="3.30.70.100:FF:000001">
    <property type="entry name" value="ATPase copper transporting beta"/>
    <property type="match status" value="1"/>
</dbReference>
<dbReference type="FunFam" id="2.70.150.10:FF:000118">
    <property type="entry name" value="Copper-transporting ATPase"/>
    <property type="match status" value="1"/>
</dbReference>
<dbReference type="Gene3D" id="3.30.70.100">
    <property type="match status" value="1"/>
</dbReference>
<dbReference type="Gene3D" id="3.40.1110.10">
    <property type="entry name" value="Calcium-transporting ATPase, cytoplasmic domain N"/>
    <property type="match status" value="1"/>
</dbReference>
<dbReference type="Gene3D" id="2.70.150.10">
    <property type="entry name" value="Calcium-transporting ATPase, cytoplasmic transduction domain A"/>
    <property type="match status" value="1"/>
</dbReference>
<dbReference type="Gene3D" id="3.40.50.1000">
    <property type="entry name" value="HAD superfamily/HAD-like"/>
    <property type="match status" value="1"/>
</dbReference>
<dbReference type="InterPro" id="IPR023299">
    <property type="entry name" value="ATPase_P-typ_cyto_dom_N"/>
</dbReference>
<dbReference type="InterPro" id="IPR018303">
    <property type="entry name" value="ATPase_P-typ_P_site"/>
</dbReference>
<dbReference type="InterPro" id="IPR023298">
    <property type="entry name" value="ATPase_P-typ_TM_dom_sf"/>
</dbReference>
<dbReference type="InterPro" id="IPR008250">
    <property type="entry name" value="ATPase_P-typ_transduc_dom_A_sf"/>
</dbReference>
<dbReference type="InterPro" id="IPR036412">
    <property type="entry name" value="HAD-like_sf"/>
</dbReference>
<dbReference type="InterPro" id="IPR023214">
    <property type="entry name" value="HAD_sf"/>
</dbReference>
<dbReference type="InterPro" id="IPR017969">
    <property type="entry name" value="Heavy-metal-associated_CS"/>
</dbReference>
<dbReference type="InterPro" id="IPR006121">
    <property type="entry name" value="HMA_dom"/>
</dbReference>
<dbReference type="InterPro" id="IPR036163">
    <property type="entry name" value="HMA_dom_sf"/>
</dbReference>
<dbReference type="InterPro" id="IPR027256">
    <property type="entry name" value="P-typ_ATPase_IB"/>
</dbReference>
<dbReference type="InterPro" id="IPR001757">
    <property type="entry name" value="P_typ_ATPase"/>
</dbReference>
<dbReference type="InterPro" id="IPR044492">
    <property type="entry name" value="P_typ_ATPase_HD_dom"/>
</dbReference>
<dbReference type="NCBIfam" id="TIGR01511">
    <property type="entry name" value="ATPase-IB1_Cu"/>
    <property type="match status" value="1"/>
</dbReference>
<dbReference type="NCBIfam" id="TIGR01525">
    <property type="entry name" value="ATPase-IB_hvy"/>
    <property type="match status" value="1"/>
</dbReference>
<dbReference type="NCBIfam" id="TIGR01494">
    <property type="entry name" value="ATPase_P-type"/>
    <property type="match status" value="1"/>
</dbReference>
<dbReference type="PANTHER" id="PTHR43520">
    <property type="entry name" value="ATP7, ISOFORM B"/>
    <property type="match status" value="1"/>
</dbReference>
<dbReference type="PANTHER" id="PTHR43520:SF8">
    <property type="entry name" value="P-TYPE CU(+) TRANSPORTER"/>
    <property type="match status" value="1"/>
</dbReference>
<dbReference type="Pfam" id="PF00122">
    <property type="entry name" value="E1-E2_ATPase"/>
    <property type="match status" value="1"/>
</dbReference>
<dbReference type="Pfam" id="PF00403">
    <property type="entry name" value="HMA"/>
    <property type="match status" value="1"/>
</dbReference>
<dbReference type="Pfam" id="PF00702">
    <property type="entry name" value="Hydrolase"/>
    <property type="match status" value="1"/>
</dbReference>
<dbReference type="PRINTS" id="PR00119">
    <property type="entry name" value="CATATPASE"/>
</dbReference>
<dbReference type="PRINTS" id="PR00943">
    <property type="entry name" value="CUATPASE"/>
</dbReference>
<dbReference type="SFLD" id="SFLDS00003">
    <property type="entry name" value="Haloacid_Dehalogenase"/>
    <property type="match status" value="1"/>
</dbReference>
<dbReference type="SFLD" id="SFLDF00027">
    <property type="entry name" value="p-type_atpase"/>
    <property type="match status" value="1"/>
</dbReference>
<dbReference type="SUPFAM" id="SSF81653">
    <property type="entry name" value="Calcium ATPase, transduction domain A"/>
    <property type="match status" value="1"/>
</dbReference>
<dbReference type="SUPFAM" id="SSF81665">
    <property type="entry name" value="Calcium ATPase, transmembrane domain M"/>
    <property type="match status" value="1"/>
</dbReference>
<dbReference type="SUPFAM" id="SSF56784">
    <property type="entry name" value="HAD-like"/>
    <property type="match status" value="1"/>
</dbReference>
<dbReference type="SUPFAM" id="SSF55008">
    <property type="entry name" value="HMA, heavy metal-associated domain"/>
    <property type="match status" value="1"/>
</dbReference>
<dbReference type="SUPFAM" id="SSF81660">
    <property type="entry name" value="Metal cation-transporting ATPase, ATP-binding domain N"/>
    <property type="match status" value="1"/>
</dbReference>
<dbReference type="PROSITE" id="PS00154">
    <property type="entry name" value="ATPASE_E1_E2"/>
    <property type="match status" value="1"/>
</dbReference>
<dbReference type="PROSITE" id="PS01047">
    <property type="entry name" value="HMA_1"/>
    <property type="match status" value="1"/>
</dbReference>
<dbReference type="PROSITE" id="PS50846">
    <property type="entry name" value="HMA_2"/>
    <property type="match status" value="1"/>
</dbReference>
<reference key="1">
    <citation type="journal article" date="1998" name="J. Bacteriol.">
        <title>Properties of the P-type ATPases encoded by the copAP operons of Helicobacter pylori and Helicobacter felis.</title>
        <authorList>
            <person name="Bayle D."/>
            <person name="Waengler S."/>
            <person name="Weitzenegger T."/>
            <person name="Steinhilber W."/>
            <person name="Volz J."/>
            <person name="Przybylski M."/>
            <person name="Schaefer K.P."/>
            <person name="Sachs G."/>
            <person name="Melchers K."/>
        </authorList>
    </citation>
    <scope>NUCLEOTIDE SEQUENCE [GENOMIC DNA]</scope>
    <source>
        <strain>A68</strain>
    </source>
</reference>
<proteinExistence type="inferred from homology"/>
<organism>
    <name type="scientific">Helicobacter pylori</name>
    <name type="common">Campylobacter pylori</name>
    <dbReference type="NCBI Taxonomy" id="210"/>
    <lineage>
        <taxon>Bacteria</taxon>
        <taxon>Pseudomonadati</taxon>
        <taxon>Campylobacterota</taxon>
        <taxon>Epsilonproteobacteria</taxon>
        <taxon>Campylobacterales</taxon>
        <taxon>Helicobacteraceae</taxon>
        <taxon>Helicobacter</taxon>
    </lineage>
</organism>
<sequence length="741" mass="81293">MKESFYIEGMTCTACSSGIERSLGRKSFVKKIEVSLLNKSANIEFNENETNLDEIFKLIEKLGYSPKKTLAEEKKEFFSPNVKLALAVIFTLFVVYLSMGAMLSPSLLPESLLTINNHSNFLNACLQLIGTLIVMHLGRDFYIQGFKALWHRQPNMSSLIAIGTSAALISSLWQLYFVYTSQWSYGHYYFESVCVILMFVMVGKRIENVSKDKALDAMQALMKNAPKTALKMHNNQQIEVLVDSIVVGDILKVLPGSAIAVDGEIIEGEGELDESMLSGEALPVYKKVGDKVFSGTFNSHTSFLMKATQDNKNSTLSQIVEMIHNAQSSKAEISRLADKVSSVFVPSVIAIAILAFVVWLIIAPKPDFWWNFGIALEVFVSVLVISCPCALGLATPMSILVANQKASSLGLFFKDAKSLEKARLVNTIVFDKTGTLTNGKPVVKSVHSNIELLELLSLAGSIEKSSEHVIAKGIVEYAKEHNAPLKEMSEVKVKTGFGISAKTDYQGAKEVIKVGNSEFFNPINALEIQENGILVFVGRVISEKEDELLGAFVLEDLPKKGVKEHIAQIKKLGINTFLLSGDNRENVKKCALELGIDGYISNAKPQDKLNKIKELKEKGQIVMMVGDGLNDAPSLAMSDVAVVMAKGSDVSVQAADIVSFNNDIKSVYSAIKLSQATIKNIKENLFWAFCYNSVFIPLACGVLYKANIMLSPAIAGLAMSLSSVSVVLNSQRLRNFKIKDH</sequence>
<keyword id="KW-0067">ATP-binding</keyword>
<keyword id="KW-1003">Cell membrane</keyword>
<keyword id="KW-0186">Copper</keyword>
<keyword id="KW-0187">Copper transport</keyword>
<keyword id="KW-0406">Ion transport</keyword>
<keyword id="KW-0460">Magnesium</keyword>
<keyword id="KW-0472">Membrane</keyword>
<keyword id="KW-0479">Metal-binding</keyword>
<keyword id="KW-0547">Nucleotide-binding</keyword>
<keyword id="KW-0597">Phosphoprotein</keyword>
<keyword id="KW-1278">Translocase</keyword>
<keyword id="KW-0812">Transmembrane</keyword>
<keyword id="KW-1133">Transmembrane helix</keyword>
<keyword id="KW-0813">Transport</keyword>
<protein>
    <recommendedName>
        <fullName>Copper-transporting ATPase</fullName>
        <ecNumber>7.2.2.9</ecNumber>
    </recommendedName>
</protein>
<name>COPA2_HELPX</name>
<evidence type="ECO:0000250" key="1"/>
<evidence type="ECO:0000255" key="2"/>
<evidence type="ECO:0000255" key="3">
    <source>
        <dbReference type="PROSITE-ProRule" id="PRU00280"/>
    </source>
</evidence>
<evidence type="ECO:0000305" key="4"/>
<feature type="chain" id="PRO_0000046172" description="Copper-transporting ATPase">
    <location>
        <begin position="1"/>
        <end position="741"/>
    </location>
</feature>
<feature type="topological domain" description="Cytoplasmic" evidence="2">
    <location>
        <begin position="1"/>
        <end position="83"/>
    </location>
</feature>
<feature type="transmembrane region" description="Helical" evidence="2">
    <location>
        <begin position="84"/>
        <end position="104"/>
    </location>
</feature>
<feature type="topological domain" description="Extracellular" evidence="2">
    <location>
        <begin position="105"/>
        <end position="124"/>
    </location>
</feature>
<feature type="transmembrane region" description="Helical" evidence="2">
    <location>
        <begin position="125"/>
        <end position="144"/>
    </location>
</feature>
<feature type="topological domain" description="Cytoplasmic" evidence="2">
    <location>
        <begin position="145"/>
        <end position="151"/>
    </location>
</feature>
<feature type="transmembrane region" description="Helical" evidence="2">
    <location>
        <begin position="152"/>
        <end position="172"/>
    </location>
</feature>
<feature type="topological domain" description="Extracellular" evidence="2">
    <location>
        <begin position="173"/>
        <end position="190"/>
    </location>
</feature>
<feature type="transmembrane region" description="Helical" evidence="2">
    <location>
        <begin position="191"/>
        <end position="211"/>
    </location>
</feature>
<feature type="topological domain" description="Cytoplasmic" evidence="2">
    <location>
        <begin position="212"/>
        <end position="339"/>
    </location>
</feature>
<feature type="transmembrane region" description="Helical" evidence="2">
    <location>
        <begin position="340"/>
        <end position="362"/>
    </location>
</feature>
<feature type="topological domain" description="Extracellular" evidence="2">
    <location>
        <begin position="363"/>
        <end position="375"/>
    </location>
</feature>
<feature type="transmembrane region" description="Helical" evidence="2">
    <location>
        <begin position="376"/>
        <end position="393"/>
    </location>
</feature>
<feature type="topological domain" description="Cytoplasmic" evidence="2">
    <location>
        <begin position="394"/>
        <end position="681"/>
    </location>
</feature>
<feature type="transmembrane region" description="Helical" evidence="2">
    <location>
        <begin position="682"/>
        <end position="701"/>
    </location>
</feature>
<feature type="topological domain" description="Extracellular" evidence="2">
    <location>
        <begin position="702"/>
        <end position="712"/>
    </location>
</feature>
<feature type="transmembrane region" description="Helical" evidence="2">
    <location>
        <begin position="713"/>
        <end position="731"/>
    </location>
</feature>
<feature type="topological domain" description="Cytoplasmic" evidence="2">
    <location>
        <begin position="732"/>
        <end position="741"/>
    </location>
</feature>
<feature type="domain" description="HMA" evidence="3">
    <location>
        <begin position="1"/>
        <end position="67"/>
    </location>
</feature>
<feature type="active site" description="4-aspartylphosphate intermediate" evidence="1">
    <location>
        <position position="431"/>
    </location>
</feature>
<feature type="binding site" evidence="3">
    <location>
        <position position="12"/>
    </location>
    <ligand>
        <name>Cu cation</name>
        <dbReference type="ChEBI" id="CHEBI:23378"/>
    </ligand>
</feature>
<feature type="binding site" evidence="3">
    <location>
        <position position="15"/>
    </location>
    <ligand>
        <name>Cu cation</name>
        <dbReference type="ChEBI" id="CHEBI:23378"/>
    </ligand>
</feature>
<feature type="binding site">
    <location>
        <position position="627"/>
    </location>
    <ligand>
        <name>Mg(2+)</name>
        <dbReference type="ChEBI" id="CHEBI:18420"/>
    </ligand>
</feature>
<feature type="binding site">
    <location>
        <position position="631"/>
    </location>
    <ligand>
        <name>Mg(2+)</name>
        <dbReference type="ChEBI" id="CHEBI:18420"/>
    </ligand>
</feature>